<organism>
    <name type="scientific">Chilabothrus striatus</name>
    <name type="common">Haitian boa constrictor</name>
    <name type="synonym">Homalochilus striatus</name>
    <dbReference type="NCBI Taxonomy" id="44152"/>
    <lineage>
        <taxon>Eukaryota</taxon>
        <taxon>Metazoa</taxon>
        <taxon>Chordata</taxon>
        <taxon>Craniata</taxon>
        <taxon>Vertebrata</taxon>
        <taxon>Euteleostomi</taxon>
        <taxon>Lepidosauria</taxon>
        <taxon>Squamata</taxon>
        <taxon>Bifurcata</taxon>
        <taxon>Unidentata</taxon>
        <taxon>Episquamata</taxon>
        <taxon>Toxicofera</taxon>
        <taxon>Serpentes</taxon>
        <taxon>Henophidia</taxon>
        <taxon>Boidae</taxon>
        <taxon>Boinae</taxon>
        <taxon>Chilabothrus</taxon>
    </lineage>
</organism>
<sequence>MPHQQILMLFGLLPVATNISTWWNFGSMLLACLTLQLLTGFFLAVHYTANINLAFSSIIHITRDVPYGWMMQNLHAIGASMFFICIYIHIARGLYYGSYLNKETWLSGTTLLIMLMATAFFGYVLPWGQMSFWAATVITNLLTAIPYLGSTMTTWLWGGFAINDPTLTRFFALHFILPFGIISLSSLHILLLHEEGSSNPLGTNSDIDKIPFHPYQTYKDMLMLTIMTIMLLTIVSFFPDIFNDPDNFSKANPLVTPQHIKPEWYFLFAYGILRSIPNKLGGALALTMSIMILLTMPFTHTSKLRSMMFRPLMQLTFWTFTATFLVISWTATKPVEPPFTTISQVAALMYFLFFISNPIMGWLENKIMKL</sequence>
<protein>
    <recommendedName>
        <fullName>Cytochrome b</fullName>
    </recommendedName>
    <alternativeName>
        <fullName>Complex III subunit 3</fullName>
    </alternativeName>
    <alternativeName>
        <fullName>Complex III subunit III</fullName>
    </alternativeName>
    <alternativeName>
        <fullName>Cytochrome b-c1 complex subunit 3</fullName>
    </alternativeName>
    <alternativeName>
        <fullName>Ubiquinol-cytochrome-c reductase complex cytochrome b subunit</fullName>
    </alternativeName>
</protein>
<geneLocation type="mitochondrion"/>
<keyword id="KW-0249">Electron transport</keyword>
<keyword id="KW-0349">Heme</keyword>
<keyword id="KW-0408">Iron</keyword>
<keyword id="KW-0472">Membrane</keyword>
<keyword id="KW-0479">Metal-binding</keyword>
<keyword id="KW-0496">Mitochondrion</keyword>
<keyword id="KW-0999">Mitochondrion inner membrane</keyword>
<keyword id="KW-0679">Respiratory chain</keyword>
<keyword id="KW-0812">Transmembrane</keyword>
<keyword id="KW-1133">Transmembrane helix</keyword>
<keyword id="KW-0813">Transport</keyword>
<keyword id="KW-0830">Ubiquinone</keyword>
<proteinExistence type="inferred from homology"/>
<dbReference type="EMBL" id="U69791">
    <property type="protein sequence ID" value="AAC01845.1"/>
    <property type="molecule type" value="Genomic_DNA"/>
</dbReference>
<dbReference type="SMR" id="O48053"/>
<dbReference type="GO" id="GO:0005743">
    <property type="term" value="C:mitochondrial inner membrane"/>
    <property type="evidence" value="ECO:0007669"/>
    <property type="project" value="UniProtKB-SubCell"/>
</dbReference>
<dbReference type="GO" id="GO:0045275">
    <property type="term" value="C:respiratory chain complex III"/>
    <property type="evidence" value="ECO:0007669"/>
    <property type="project" value="InterPro"/>
</dbReference>
<dbReference type="GO" id="GO:0046872">
    <property type="term" value="F:metal ion binding"/>
    <property type="evidence" value="ECO:0007669"/>
    <property type="project" value="UniProtKB-KW"/>
</dbReference>
<dbReference type="GO" id="GO:0008121">
    <property type="term" value="F:ubiquinol-cytochrome-c reductase activity"/>
    <property type="evidence" value="ECO:0007669"/>
    <property type="project" value="InterPro"/>
</dbReference>
<dbReference type="GO" id="GO:0006122">
    <property type="term" value="P:mitochondrial electron transport, ubiquinol to cytochrome c"/>
    <property type="evidence" value="ECO:0007669"/>
    <property type="project" value="TreeGrafter"/>
</dbReference>
<dbReference type="CDD" id="cd00290">
    <property type="entry name" value="cytochrome_b_C"/>
    <property type="match status" value="1"/>
</dbReference>
<dbReference type="CDD" id="cd00284">
    <property type="entry name" value="Cytochrome_b_N"/>
    <property type="match status" value="1"/>
</dbReference>
<dbReference type="Gene3D" id="1.20.810.10">
    <property type="entry name" value="Cytochrome Bc1 Complex, Chain C"/>
    <property type="match status" value="1"/>
</dbReference>
<dbReference type="InterPro" id="IPR005798">
    <property type="entry name" value="Cyt_b/b6_C"/>
</dbReference>
<dbReference type="InterPro" id="IPR036150">
    <property type="entry name" value="Cyt_b/b6_C_sf"/>
</dbReference>
<dbReference type="InterPro" id="IPR005797">
    <property type="entry name" value="Cyt_b/b6_N"/>
</dbReference>
<dbReference type="InterPro" id="IPR027387">
    <property type="entry name" value="Cytb/b6-like_sf"/>
</dbReference>
<dbReference type="InterPro" id="IPR030689">
    <property type="entry name" value="Cytochrome_b"/>
</dbReference>
<dbReference type="InterPro" id="IPR048260">
    <property type="entry name" value="Cytochrome_b_C_euk/bac"/>
</dbReference>
<dbReference type="InterPro" id="IPR048259">
    <property type="entry name" value="Cytochrome_b_N_euk/bac"/>
</dbReference>
<dbReference type="InterPro" id="IPR016174">
    <property type="entry name" value="Di-haem_cyt_TM"/>
</dbReference>
<dbReference type="PANTHER" id="PTHR19271">
    <property type="entry name" value="CYTOCHROME B"/>
    <property type="match status" value="1"/>
</dbReference>
<dbReference type="PANTHER" id="PTHR19271:SF16">
    <property type="entry name" value="CYTOCHROME B"/>
    <property type="match status" value="1"/>
</dbReference>
<dbReference type="Pfam" id="PF00032">
    <property type="entry name" value="Cytochrom_B_C"/>
    <property type="match status" value="1"/>
</dbReference>
<dbReference type="Pfam" id="PF00033">
    <property type="entry name" value="Cytochrome_B"/>
    <property type="match status" value="1"/>
</dbReference>
<dbReference type="PIRSF" id="PIRSF038885">
    <property type="entry name" value="COB"/>
    <property type="match status" value="1"/>
</dbReference>
<dbReference type="SUPFAM" id="SSF81648">
    <property type="entry name" value="a domain/subunit of cytochrome bc1 complex (Ubiquinol-cytochrome c reductase)"/>
    <property type="match status" value="1"/>
</dbReference>
<dbReference type="SUPFAM" id="SSF81342">
    <property type="entry name" value="Transmembrane di-heme cytochromes"/>
    <property type="match status" value="1"/>
</dbReference>
<dbReference type="PROSITE" id="PS51003">
    <property type="entry name" value="CYTB_CTER"/>
    <property type="match status" value="1"/>
</dbReference>
<dbReference type="PROSITE" id="PS51002">
    <property type="entry name" value="CYTB_NTER"/>
    <property type="match status" value="1"/>
</dbReference>
<accession>O48053</accession>
<reference key="1">
    <citation type="thesis" date="1997" institute="Queen's University / Kingston" country="Canada">
        <title>Hic Sunt Serpentes -- molecular phylogenetics and the Boidae (Serpentes: Booidea).</title>
        <authorList>
            <person name="Campbell B.N."/>
        </authorList>
    </citation>
    <scope>NUCLEOTIDE SEQUENCE [GENOMIC DNA]</scope>
</reference>
<feature type="chain" id="PRO_0000060927" description="Cytochrome b">
    <location>
        <begin position="1"/>
        <end position="370"/>
    </location>
</feature>
<feature type="transmembrane region" description="Helical" evidence="2">
    <location>
        <begin position="25"/>
        <end position="45"/>
    </location>
</feature>
<feature type="transmembrane region" description="Helical" evidence="2">
    <location>
        <begin position="69"/>
        <end position="90"/>
    </location>
</feature>
<feature type="transmembrane region" description="Helical" evidence="2">
    <location>
        <begin position="105"/>
        <end position="125"/>
    </location>
</feature>
<feature type="transmembrane region" description="Helical" evidence="2">
    <location>
        <begin position="170"/>
        <end position="190"/>
    </location>
</feature>
<feature type="transmembrane region" description="Helical" evidence="2">
    <location>
        <begin position="218"/>
        <end position="238"/>
    </location>
</feature>
<feature type="transmembrane region" description="Helical" evidence="2">
    <location>
        <begin position="280"/>
        <end position="300"/>
    </location>
</feature>
<feature type="transmembrane region" description="Helical" evidence="2">
    <location>
        <begin position="312"/>
        <end position="332"/>
    </location>
</feature>
<feature type="transmembrane region" description="Helical" evidence="2">
    <location>
        <begin position="339"/>
        <end position="358"/>
    </location>
</feature>
<feature type="binding site" description="axial binding residue" evidence="2">
    <location>
        <position position="75"/>
    </location>
    <ligand>
        <name>heme b</name>
        <dbReference type="ChEBI" id="CHEBI:60344"/>
        <label>b562</label>
    </ligand>
    <ligandPart>
        <name>Fe</name>
        <dbReference type="ChEBI" id="CHEBI:18248"/>
    </ligandPart>
</feature>
<feature type="binding site" description="axial binding residue" evidence="2">
    <location>
        <position position="89"/>
    </location>
    <ligand>
        <name>heme b</name>
        <dbReference type="ChEBI" id="CHEBI:60344"/>
        <label>b566</label>
    </ligand>
    <ligandPart>
        <name>Fe</name>
        <dbReference type="ChEBI" id="CHEBI:18248"/>
    </ligandPart>
</feature>
<feature type="binding site" description="axial binding residue" evidence="2">
    <location>
        <position position="174"/>
    </location>
    <ligand>
        <name>heme b</name>
        <dbReference type="ChEBI" id="CHEBI:60344"/>
        <label>b562</label>
    </ligand>
    <ligandPart>
        <name>Fe</name>
        <dbReference type="ChEBI" id="CHEBI:18248"/>
    </ligandPart>
</feature>
<feature type="binding site" description="axial binding residue" evidence="2">
    <location>
        <position position="188"/>
    </location>
    <ligand>
        <name>heme b</name>
        <dbReference type="ChEBI" id="CHEBI:60344"/>
        <label>b566</label>
    </ligand>
    <ligandPart>
        <name>Fe</name>
        <dbReference type="ChEBI" id="CHEBI:18248"/>
    </ligandPart>
</feature>
<feature type="binding site" evidence="2">
    <location>
        <position position="193"/>
    </location>
    <ligand>
        <name>a ubiquinone</name>
        <dbReference type="ChEBI" id="CHEBI:16389"/>
    </ligand>
</feature>
<name>CYB_CHISR</name>
<gene>
    <name type="primary">MT-CYB</name>
    <name type="synonym">COB</name>
    <name type="synonym">CYTB</name>
    <name type="synonym">MTCYB</name>
</gene>
<comment type="function">
    <text evidence="2">Component of the ubiquinol-cytochrome c reductase complex (complex III or cytochrome b-c1 complex) that is part of the mitochondrial respiratory chain. The b-c1 complex mediates electron transfer from ubiquinol to cytochrome c. Contributes to the generation of a proton gradient across the mitochondrial membrane that is then used for ATP synthesis.</text>
</comment>
<comment type="cofactor">
    <cofactor evidence="2">
        <name>heme b</name>
        <dbReference type="ChEBI" id="CHEBI:60344"/>
    </cofactor>
    <text evidence="2">Binds 2 heme b groups non-covalently.</text>
</comment>
<comment type="subunit">
    <text evidence="2">The cytochrome bc1 complex contains 3 respiratory subunits (MT-CYB, CYC1 and UQCRFS1), 2 core proteins (UQCRC1 and UQCRC2) and probably 6 low-molecular weight proteins.</text>
</comment>
<comment type="subcellular location">
    <subcellularLocation>
        <location evidence="2">Mitochondrion inner membrane</location>
        <topology evidence="2">Multi-pass membrane protein</topology>
    </subcellularLocation>
</comment>
<comment type="miscellaneous">
    <text evidence="1">Heme 1 (or BL or b562) is low-potential and absorbs at about 562 nm, and heme 2 (or BH or b566) is high-potential and absorbs at about 566 nm.</text>
</comment>
<comment type="similarity">
    <text evidence="3 4">Belongs to the cytochrome b family.</text>
</comment>
<comment type="caution">
    <text evidence="2">The full-length protein contains only eight transmembrane helices, not nine as predicted by bioinformatics tools.</text>
</comment>
<evidence type="ECO:0000250" key="1"/>
<evidence type="ECO:0000250" key="2">
    <source>
        <dbReference type="UniProtKB" id="P00157"/>
    </source>
</evidence>
<evidence type="ECO:0000255" key="3">
    <source>
        <dbReference type="PROSITE-ProRule" id="PRU00967"/>
    </source>
</evidence>
<evidence type="ECO:0000255" key="4">
    <source>
        <dbReference type="PROSITE-ProRule" id="PRU00968"/>
    </source>
</evidence>